<name>ERR1_RAT</name>
<reference key="1">
    <citation type="submission" date="2003-04" db="EMBL/GenBank/DDBJ databases">
        <title>Molecular cloning and expression study of estrogen receptor-related receptor alpha in rat ovary.</title>
        <authorList>
            <person name="Lui K."/>
            <person name="Chen S."/>
            <person name="Chan F.L."/>
        </authorList>
    </citation>
    <scope>NUCLEOTIDE SEQUENCE [MRNA]</scope>
    <source>
        <strain>Sprague-Dawley</strain>
    </source>
</reference>
<reference key="2">
    <citation type="journal article" date="2004" name="Genome Res.">
        <title>The status, quality, and expansion of the NIH full-length cDNA project: the Mammalian Gene Collection (MGC).</title>
        <authorList>
            <consortium name="The MGC Project Team"/>
        </authorList>
    </citation>
    <scope>NUCLEOTIDE SEQUENCE [LARGE SCALE MRNA]</scope>
    <source>
        <tissue>Heart</tissue>
    </source>
</reference>
<reference key="3">
    <citation type="journal article" date="2012" name="Nat. Commun.">
        <title>Quantitative maps of protein phosphorylation sites across 14 different rat organs and tissues.</title>
        <authorList>
            <person name="Lundby A."/>
            <person name="Secher A."/>
            <person name="Lage K."/>
            <person name="Nordsborg N.B."/>
            <person name="Dmytriyev A."/>
            <person name="Lundby C."/>
            <person name="Olsen J.V."/>
        </authorList>
    </citation>
    <scope>PHOSPHORYLATION [LARGE SCALE ANALYSIS] AT SER-19</scope>
    <scope>IDENTIFICATION BY MASS SPECTROMETRY [LARGE SCALE ANALYSIS]</scope>
</reference>
<accession>Q5QJV7</accession>
<accession>Q3MHT1</accession>
<comment type="function">
    <text>Binds to an ERR-alpha response element (ERRE) containing a single consensus half-site, 5'-TNAAGGTCA-3'. Can bind to the medium-chain acyl coenzyme A dehydrogenase (MCAD) response element NRRE-1 and may act as an important regulator of MCAD promoter. Binds to the C1 region of the lactoferrin gene promoter. Requires dimerization and the coactivator, PGC-1A, for full activity. The ERRalpha/PGC1alpha complex is a regulator of energy metabolism. Induces the expression of PERM1 in the skeletal muscle.</text>
</comment>
<comment type="subunit">
    <text evidence="1 2">Binds DNA as a monomer or a homodimer. Interacts (via the AF2 domain) with coactivator PPARGC1A (via the L3 motif); the interaction greatly enhances transcriptional activity of genes involved in energy metabolism. Interacts with PIAS4; the interaction enhances sumoylation (By similarity). Interacts with MAPK15; promotes re-localization of ESRRA to the cytoplasm through a XPO1-dependent mechanism then inhibits ESRRA transcriptional activity (By similarity).</text>
</comment>
<comment type="subcellular location">
    <subcellularLocation>
        <location evidence="2 3">Nucleus</location>
    </subcellularLocation>
    <subcellularLocation>
        <location evidence="2">Cytoplasm</location>
    </subcellularLocation>
    <text evidence="2">Co-localizes to the cytoplasm only in presence of MAPK15.</text>
</comment>
<comment type="PTM">
    <text evidence="1">Phosphorylation on Ser-19 enhances sumoylation on Lys-14 increasing repression of transcriptional activity.</text>
</comment>
<comment type="PTM">
    <text evidence="1">Sumoylated with SUMO2. Main site is Lys-14 which is enhanced by phosphorylation on Ser-19, cofactor activation, and by interaction with PIAS4. Sumoylation enhances repression of transcriptional activity, but has no effect on subcellular location nor on DNA binding (By similarity).</text>
</comment>
<comment type="PTM">
    <text evidence="1">Reversibly acetylated. Acetylation by PCAF/KAT2 at Lys-129, Lys-138, Lys-160 and Lys-162 and PCAF/KAT2 decreases transcriptional activity probably by inhibiting DNA-binding activity; deacetylation involves SIRT1 and HDAC8 and increases DNA-binding (By similarity).</text>
</comment>
<comment type="similarity">
    <text evidence="6">Belongs to the nuclear hormone receptor family. NR3 subfamily.</text>
</comment>
<comment type="sequence caution" evidence="6">
    <conflict type="erroneous initiation">
        <sequence resource="EMBL-CDS" id="AAI04702"/>
    </conflict>
    <text>Extended N-terminus.</text>
</comment>
<comment type="sequence caution" evidence="6">
    <conflict type="frameshift">
        <sequence resource="EMBL-CDS" id="AAQ17212"/>
    </conflict>
</comment>
<organism>
    <name type="scientific">Rattus norvegicus</name>
    <name type="common">Rat</name>
    <dbReference type="NCBI Taxonomy" id="10116"/>
    <lineage>
        <taxon>Eukaryota</taxon>
        <taxon>Metazoa</taxon>
        <taxon>Chordata</taxon>
        <taxon>Craniata</taxon>
        <taxon>Vertebrata</taxon>
        <taxon>Euteleostomi</taxon>
        <taxon>Mammalia</taxon>
        <taxon>Eutheria</taxon>
        <taxon>Euarchontoglires</taxon>
        <taxon>Glires</taxon>
        <taxon>Rodentia</taxon>
        <taxon>Myomorpha</taxon>
        <taxon>Muroidea</taxon>
        <taxon>Muridae</taxon>
        <taxon>Murinae</taxon>
        <taxon>Rattus</taxon>
    </lineage>
</organism>
<feature type="chain" id="PRO_0000295232" description="Steroid hormone receptor ERR1">
    <location>
        <begin position="1"/>
        <end position="422"/>
    </location>
</feature>
<feature type="domain" description="NR LBD" evidence="4">
    <location>
        <begin position="192"/>
        <end position="420"/>
    </location>
</feature>
<feature type="DNA-binding region" description="Nuclear receptor" evidence="3">
    <location>
        <begin position="76"/>
        <end position="151"/>
    </location>
</feature>
<feature type="zinc finger region" description="NR C4-type" evidence="3">
    <location>
        <begin position="79"/>
        <end position="99"/>
    </location>
</feature>
<feature type="zinc finger region" description="NR C4-type" evidence="3">
    <location>
        <begin position="115"/>
        <end position="134"/>
    </location>
</feature>
<feature type="region of interest" description="Repressor domain" evidence="1">
    <location>
        <begin position="1"/>
        <end position="76"/>
    </location>
</feature>
<feature type="region of interest" description="Disordered" evidence="5">
    <location>
        <begin position="1"/>
        <end position="66"/>
    </location>
</feature>
<feature type="region of interest" description="AF-2 domain" evidence="1">
    <location>
        <begin position="402"/>
        <end position="422"/>
    </location>
</feature>
<feature type="site" description="Required for DNA-dependent dimerization" evidence="1">
    <location>
        <position position="124"/>
    </location>
</feature>
<feature type="modified residue" description="Phosphoserine" evidence="7">
    <location>
        <position position="19"/>
    </location>
</feature>
<feature type="modified residue" description="Phosphoserine" evidence="2">
    <location>
        <position position="22"/>
    </location>
</feature>
<feature type="modified residue" description="N6-acetyllysine; by PCAF/KAT2B" evidence="2">
    <location>
        <position position="129"/>
    </location>
</feature>
<feature type="modified residue" description="N6-acetyllysine; by PCAF/KAT2B" evidence="2">
    <location>
        <position position="138"/>
    </location>
</feature>
<feature type="modified residue" description="N6-acetyllysine; by PCAF/KAT2B" evidence="2">
    <location>
        <position position="160"/>
    </location>
</feature>
<feature type="modified residue" description="N6-acetyllysine; by PCAF/KAT2B" evidence="2">
    <location>
        <position position="162"/>
    </location>
</feature>
<feature type="cross-link" description="Glycyl lysine isopeptide (Lys-Gly) (interchain with G-Cter in SUMO)" evidence="1">
    <location>
        <position position="14"/>
    </location>
</feature>
<feature type="cross-link" description="Glycyl lysine isopeptide (Lys-Gly) (interchain with G-Cter in SUMO2)" evidence="2">
    <location>
        <position position="189"/>
    </location>
</feature>
<feature type="cross-link" description="Glycyl lysine isopeptide (Lys-Gly) (interchain with G-Cter in SUMO); alternate" evidence="1">
    <location>
        <position position="402"/>
    </location>
</feature>
<feature type="cross-link" description="Glycyl lysine isopeptide (Lys-Gly) (interchain with G-Cter in SUMO2); alternate" evidence="2">
    <location>
        <position position="402"/>
    </location>
</feature>
<keyword id="KW-0007">Acetylation</keyword>
<keyword id="KW-0963">Cytoplasm</keyword>
<keyword id="KW-0238">DNA-binding</keyword>
<keyword id="KW-1017">Isopeptide bond</keyword>
<keyword id="KW-0479">Metal-binding</keyword>
<keyword id="KW-0539">Nucleus</keyword>
<keyword id="KW-0597">Phosphoprotein</keyword>
<keyword id="KW-0675">Receptor</keyword>
<keyword id="KW-1185">Reference proteome</keyword>
<keyword id="KW-0804">Transcription</keyword>
<keyword id="KW-0805">Transcription regulation</keyword>
<keyword id="KW-0832">Ubl conjugation</keyword>
<keyword id="KW-0862">Zinc</keyword>
<keyword id="KW-0863">Zinc-finger</keyword>
<protein>
    <recommendedName>
        <fullName>Steroid hormone receptor ERR1</fullName>
    </recommendedName>
    <alternativeName>
        <fullName>Estrogen-related receptor alpha</fullName>
        <shortName>ERR-alpha</shortName>
    </alternativeName>
    <alternativeName>
        <fullName>Nuclear receptor subfamily 3 group B member 1</fullName>
    </alternativeName>
</protein>
<proteinExistence type="evidence at protein level"/>
<sequence length="422" mass="45464">MSSQVVGIEPLYIKAEPASPDSPKGSSETETEPPVTLASGPAPARCLPGHKEEEDGEGAGSGEQGSGKLVLSSLPKRLCLVCGDVASGYHYGVASCEACKAFFKRTIQGSIEYSCPASNECEITKRRRKACQACRFTKCLRVGMLKEGVRLDRVRGGRQKYKRRPEVDPLPFPGPFPAGPLAVAGGPRKTAPVNALVSHLLVVEPEKLYAMPDPASPDGHLPAVATLCDLFDREIVVTISWAKSIPGFSSLSLSDQMSVLQSVWMEVLVLGVAQRSLPLQDELAFAEDLVLDEEGARAAGLGDLGAALLQLVRRLQALRLEREEYVLLKALALANSDSVHIEDAEAVEQLREALHEALLEYEAGRAGPGGGAERRRAGRLLLTLPLLRQTAGKVLAHFYGVKLEGKVPMHKLFLEMLEAMMD</sequence>
<evidence type="ECO:0000250" key="1"/>
<evidence type="ECO:0000250" key="2">
    <source>
        <dbReference type="UniProtKB" id="P11474"/>
    </source>
</evidence>
<evidence type="ECO:0000255" key="3">
    <source>
        <dbReference type="PROSITE-ProRule" id="PRU00407"/>
    </source>
</evidence>
<evidence type="ECO:0000255" key="4">
    <source>
        <dbReference type="PROSITE-ProRule" id="PRU01189"/>
    </source>
</evidence>
<evidence type="ECO:0000256" key="5">
    <source>
        <dbReference type="SAM" id="MobiDB-lite"/>
    </source>
</evidence>
<evidence type="ECO:0000305" key="6"/>
<evidence type="ECO:0007744" key="7">
    <source>
    </source>
</evidence>
<dbReference type="EMBL" id="AY280663">
    <property type="protein sequence ID" value="AAQ17212.1"/>
    <property type="status" value="ALT_FRAME"/>
    <property type="molecule type" value="mRNA"/>
</dbReference>
<dbReference type="EMBL" id="BC104701">
    <property type="protein sequence ID" value="AAI04702.1"/>
    <property type="status" value="ALT_INIT"/>
    <property type="molecule type" value="mRNA"/>
</dbReference>
<dbReference type="RefSeq" id="NP_001008511.2">
    <property type="nucleotide sequence ID" value="NM_001008511.2"/>
</dbReference>
<dbReference type="SMR" id="Q5QJV7"/>
<dbReference type="BioGRID" id="254410">
    <property type="interactions" value="1"/>
</dbReference>
<dbReference type="FunCoup" id="Q5QJV7">
    <property type="interactions" value="315"/>
</dbReference>
<dbReference type="STRING" id="10116.ENSRNOP00000028697"/>
<dbReference type="iPTMnet" id="Q5QJV7"/>
<dbReference type="PhosphoSitePlus" id="Q5QJV7"/>
<dbReference type="PaxDb" id="10116-ENSRNOP00000028697"/>
<dbReference type="GeneID" id="293701"/>
<dbReference type="KEGG" id="rno:293701"/>
<dbReference type="UCSC" id="RGD:1583866">
    <property type="organism name" value="rat"/>
</dbReference>
<dbReference type="AGR" id="RGD:1583866"/>
<dbReference type="CTD" id="2101"/>
<dbReference type="RGD" id="1583866">
    <property type="gene designation" value="Esrra"/>
</dbReference>
<dbReference type="VEuPathDB" id="HostDB:ENSRNOG00000021139"/>
<dbReference type="eggNOG" id="KOG3575">
    <property type="taxonomic scope" value="Eukaryota"/>
</dbReference>
<dbReference type="HOGENOM" id="CLU_007368_11_0_1"/>
<dbReference type="InParanoid" id="Q5QJV7"/>
<dbReference type="OrthoDB" id="83365at9989"/>
<dbReference type="PhylomeDB" id="Q5QJV7"/>
<dbReference type="TreeFam" id="TF323751"/>
<dbReference type="Reactome" id="R-RNO-383280">
    <property type="pathway name" value="Nuclear Receptor transcription pathway"/>
</dbReference>
<dbReference type="PRO" id="PR:Q5QJV7"/>
<dbReference type="Proteomes" id="UP000002494">
    <property type="component" value="Chromosome 1"/>
</dbReference>
<dbReference type="Bgee" id="ENSRNOG00000021139">
    <property type="expression patterns" value="Expressed in duodenum and 19 other cell types or tissues"/>
</dbReference>
<dbReference type="ExpressionAtlas" id="Q5QJV7">
    <property type="expression patterns" value="baseline and differential"/>
</dbReference>
<dbReference type="GO" id="GO:0000785">
    <property type="term" value="C:chromatin"/>
    <property type="evidence" value="ECO:0000318"/>
    <property type="project" value="GO_Central"/>
</dbReference>
<dbReference type="GO" id="GO:0005737">
    <property type="term" value="C:cytoplasm"/>
    <property type="evidence" value="ECO:0000250"/>
    <property type="project" value="UniProtKB"/>
</dbReference>
<dbReference type="GO" id="GO:0005634">
    <property type="term" value="C:nucleus"/>
    <property type="evidence" value="ECO:0000266"/>
    <property type="project" value="RGD"/>
</dbReference>
<dbReference type="GO" id="GO:0001228">
    <property type="term" value="F:DNA-binding transcription activator activity, RNA polymerase II-specific"/>
    <property type="evidence" value="ECO:0000266"/>
    <property type="project" value="RGD"/>
</dbReference>
<dbReference type="GO" id="GO:0003700">
    <property type="term" value="F:DNA-binding transcription factor activity"/>
    <property type="evidence" value="ECO:0000250"/>
    <property type="project" value="UniProtKB"/>
</dbReference>
<dbReference type="GO" id="GO:0001227">
    <property type="term" value="F:DNA-binding transcription repressor activity, RNA polymerase II-specific"/>
    <property type="evidence" value="ECO:0000266"/>
    <property type="project" value="RGD"/>
</dbReference>
<dbReference type="GO" id="GO:0034056">
    <property type="term" value="F:estrogen response element binding"/>
    <property type="evidence" value="ECO:0000318"/>
    <property type="project" value="GO_Central"/>
</dbReference>
<dbReference type="GO" id="GO:0004879">
    <property type="term" value="F:nuclear receptor activity"/>
    <property type="evidence" value="ECO:0000318"/>
    <property type="project" value="GO_Central"/>
</dbReference>
<dbReference type="GO" id="GO:0003707">
    <property type="term" value="F:nuclear steroid receptor activity"/>
    <property type="evidence" value="ECO:0007669"/>
    <property type="project" value="InterPro"/>
</dbReference>
<dbReference type="GO" id="GO:0019904">
    <property type="term" value="F:protein domain specific binding"/>
    <property type="evidence" value="ECO:0000266"/>
    <property type="project" value="RGD"/>
</dbReference>
<dbReference type="GO" id="GO:0000978">
    <property type="term" value="F:RNA polymerase II cis-regulatory region sequence-specific DNA binding"/>
    <property type="evidence" value="ECO:0000266"/>
    <property type="project" value="RGD"/>
</dbReference>
<dbReference type="GO" id="GO:0043565">
    <property type="term" value="F:sequence-specific DNA binding"/>
    <property type="evidence" value="ECO:0000314"/>
    <property type="project" value="RGD"/>
</dbReference>
<dbReference type="GO" id="GO:1990837">
    <property type="term" value="F:sequence-specific double-stranded DNA binding"/>
    <property type="evidence" value="ECO:0000266"/>
    <property type="project" value="RGD"/>
</dbReference>
<dbReference type="GO" id="GO:0005496">
    <property type="term" value="F:steroid binding"/>
    <property type="evidence" value="ECO:0007669"/>
    <property type="project" value="InterPro"/>
</dbReference>
<dbReference type="GO" id="GO:0008270">
    <property type="term" value="F:zinc ion binding"/>
    <property type="evidence" value="ECO:0007669"/>
    <property type="project" value="UniProtKB-KW"/>
</dbReference>
<dbReference type="GO" id="GO:0051216">
    <property type="term" value="P:cartilage development"/>
    <property type="evidence" value="ECO:0000315"/>
    <property type="project" value="RGD"/>
</dbReference>
<dbReference type="GO" id="GO:0000122">
    <property type="term" value="P:negative regulation of transcription by RNA polymerase II"/>
    <property type="evidence" value="ECO:0000266"/>
    <property type="project" value="RGD"/>
</dbReference>
<dbReference type="GO" id="GO:1900078">
    <property type="term" value="P:positive regulation of cellular response to insulin stimulus"/>
    <property type="evidence" value="ECO:0000315"/>
    <property type="project" value="RGD"/>
</dbReference>
<dbReference type="GO" id="GO:0045893">
    <property type="term" value="P:positive regulation of DNA-templated transcription"/>
    <property type="evidence" value="ECO:0000315"/>
    <property type="project" value="RGD"/>
</dbReference>
<dbReference type="GO" id="GO:0045944">
    <property type="term" value="P:positive regulation of transcription by RNA polymerase II"/>
    <property type="evidence" value="ECO:0000266"/>
    <property type="project" value="RGD"/>
</dbReference>
<dbReference type="GO" id="GO:0042127">
    <property type="term" value="P:regulation of cell population proliferation"/>
    <property type="evidence" value="ECO:0000315"/>
    <property type="project" value="RGD"/>
</dbReference>
<dbReference type="GO" id="GO:0006355">
    <property type="term" value="P:regulation of DNA-templated transcription"/>
    <property type="evidence" value="ECO:0000250"/>
    <property type="project" value="UniProtKB"/>
</dbReference>
<dbReference type="GO" id="GO:0030278">
    <property type="term" value="P:regulation of ossification"/>
    <property type="evidence" value="ECO:0000315"/>
    <property type="project" value="RGD"/>
</dbReference>
<dbReference type="GO" id="GO:0045667">
    <property type="term" value="P:regulation of osteoblast differentiation"/>
    <property type="evidence" value="ECO:0000315"/>
    <property type="project" value="RGD"/>
</dbReference>
<dbReference type="GO" id="GO:0045670">
    <property type="term" value="P:regulation of osteoclast differentiation"/>
    <property type="evidence" value="ECO:0000315"/>
    <property type="project" value="RGD"/>
</dbReference>
<dbReference type="GO" id="GO:0006357">
    <property type="term" value="P:regulation of transcription by RNA polymerase II"/>
    <property type="evidence" value="ECO:0000318"/>
    <property type="project" value="GO_Central"/>
</dbReference>
<dbReference type="GO" id="GO:0032355">
    <property type="term" value="P:response to estradiol"/>
    <property type="evidence" value="ECO:0000270"/>
    <property type="project" value="RGD"/>
</dbReference>
<dbReference type="CDD" id="cd07170">
    <property type="entry name" value="NR_DBD_ERR"/>
    <property type="match status" value="1"/>
</dbReference>
<dbReference type="CDD" id="cd06946">
    <property type="entry name" value="NR_LBD_ERR"/>
    <property type="match status" value="1"/>
</dbReference>
<dbReference type="FunFam" id="3.30.50.10:FF:000008">
    <property type="entry name" value="estrogen-related receptor gamma isoform X1"/>
    <property type="match status" value="1"/>
</dbReference>
<dbReference type="FunFam" id="1.10.565.10:FF:000023">
    <property type="entry name" value="Steroid hormone receptor ERR1"/>
    <property type="match status" value="1"/>
</dbReference>
<dbReference type="Gene3D" id="3.30.50.10">
    <property type="entry name" value="Erythroid Transcription Factor GATA-1, subunit A"/>
    <property type="match status" value="1"/>
</dbReference>
<dbReference type="Gene3D" id="1.10.565.10">
    <property type="entry name" value="Retinoid X Receptor"/>
    <property type="match status" value="1"/>
</dbReference>
<dbReference type="InterPro" id="IPR024178">
    <property type="entry name" value="Est_rcpt/est-rel_rcp"/>
</dbReference>
<dbReference type="InterPro" id="IPR035500">
    <property type="entry name" value="NHR-like_dom_sf"/>
</dbReference>
<dbReference type="InterPro" id="IPR000536">
    <property type="entry name" value="Nucl_hrmn_rcpt_lig-bd"/>
</dbReference>
<dbReference type="InterPro" id="IPR050200">
    <property type="entry name" value="Nuclear_hormone_rcpt_NR3"/>
</dbReference>
<dbReference type="InterPro" id="IPR001723">
    <property type="entry name" value="Nuclear_hrmn_rcpt"/>
</dbReference>
<dbReference type="InterPro" id="IPR027289">
    <property type="entry name" value="Oest-rel_rcp"/>
</dbReference>
<dbReference type="InterPro" id="IPR001628">
    <property type="entry name" value="Znf_hrmn_rcpt"/>
</dbReference>
<dbReference type="InterPro" id="IPR013088">
    <property type="entry name" value="Znf_NHR/GATA"/>
</dbReference>
<dbReference type="PANTHER" id="PTHR48092">
    <property type="entry name" value="KNIRPS-RELATED PROTEIN-RELATED"/>
    <property type="match status" value="1"/>
</dbReference>
<dbReference type="Pfam" id="PF00104">
    <property type="entry name" value="Hormone_recep"/>
    <property type="match status" value="1"/>
</dbReference>
<dbReference type="Pfam" id="PF00105">
    <property type="entry name" value="zf-C4"/>
    <property type="match status" value="1"/>
</dbReference>
<dbReference type="PIRSF" id="PIRSF002527">
    <property type="entry name" value="ER-like_NR"/>
    <property type="match status" value="1"/>
</dbReference>
<dbReference type="PIRSF" id="PIRSF500939">
    <property type="entry name" value="ERR1-2-3"/>
    <property type="match status" value="1"/>
</dbReference>
<dbReference type="PRINTS" id="PR00398">
    <property type="entry name" value="STRDHORMONER"/>
</dbReference>
<dbReference type="PRINTS" id="PR00047">
    <property type="entry name" value="STROIDFINGER"/>
</dbReference>
<dbReference type="SMART" id="SM00430">
    <property type="entry name" value="HOLI"/>
    <property type="match status" value="1"/>
</dbReference>
<dbReference type="SMART" id="SM00399">
    <property type="entry name" value="ZnF_C4"/>
    <property type="match status" value="1"/>
</dbReference>
<dbReference type="SUPFAM" id="SSF57716">
    <property type="entry name" value="Glucocorticoid receptor-like (DNA-binding domain)"/>
    <property type="match status" value="1"/>
</dbReference>
<dbReference type="SUPFAM" id="SSF48508">
    <property type="entry name" value="Nuclear receptor ligand-binding domain"/>
    <property type="match status" value="1"/>
</dbReference>
<dbReference type="PROSITE" id="PS51843">
    <property type="entry name" value="NR_LBD"/>
    <property type="match status" value="1"/>
</dbReference>
<dbReference type="PROSITE" id="PS00031">
    <property type="entry name" value="NUCLEAR_REC_DBD_1"/>
    <property type="match status" value="1"/>
</dbReference>
<dbReference type="PROSITE" id="PS51030">
    <property type="entry name" value="NUCLEAR_REC_DBD_2"/>
    <property type="match status" value="1"/>
</dbReference>
<gene>
    <name type="primary">Esrra</name>
    <name type="synonym">Nr3b1</name>
</gene>